<protein>
    <recommendedName>
        <fullName evidence="1">Uridylate kinase</fullName>
        <shortName evidence="1">UK</shortName>
        <ecNumber evidence="1">2.7.4.22</ecNumber>
    </recommendedName>
    <alternativeName>
        <fullName evidence="1">Uridine monophosphate kinase</fullName>
        <shortName evidence="1">UMP kinase</shortName>
        <shortName evidence="1">UMPK</shortName>
    </alternativeName>
</protein>
<dbReference type="EC" id="2.7.4.22" evidence="1"/>
<dbReference type="EMBL" id="AL935263">
    <property type="protein sequence ID" value="CCC79297.1"/>
    <property type="molecule type" value="Genomic_DNA"/>
</dbReference>
<dbReference type="RefSeq" id="WP_003640737.1">
    <property type="nucleotide sequence ID" value="NC_004567.2"/>
</dbReference>
<dbReference type="RefSeq" id="YP_004889811.1">
    <property type="nucleotide sequence ID" value="NC_004567.2"/>
</dbReference>
<dbReference type="SMR" id="Q88VJ6"/>
<dbReference type="STRING" id="220668.lp_2053"/>
<dbReference type="EnsemblBacteria" id="CCC79297">
    <property type="protein sequence ID" value="CCC79297"/>
    <property type="gene ID" value="lp_2053"/>
</dbReference>
<dbReference type="GeneID" id="89669334"/>
<dbReference type="KEGG" id="lpl:lp_2053"/>
<dbReference type="PATRIC" id="fig|220668.9.peg.1738"/>
<dbReference type="eggNOG" id="COG0528">
    <property type="taxonomic scope" value="Bacteria"/>
</dbReference>
<dbReference type="HOGENOM" id="CLU_033861_0_0_9"/>
<dbReference type="OrthoDB" id="9807458at2"/>
<dbReference type="PhylomeDB" id="Q88VJ6"/>
<dbReference type="UniPathway" id="UPA00159">
    <property type="reaction ID" value="UER00275"/>
</dbReference>
<dbReference type="Proteomes" id="UP000000432">
    <property type="component" value="Chromosome"/>
</dbReference>
<dbReference type="GO" id="GO:0005737">
    <property type="term" value="C:cytoplasm"/>
    <property type="evidence" value="ECO:0007669"/>
    <property type="project" value="UniProtKB-SubCell"/>
</dbReference>
<dbReference type="GO" id="GO:0005524">
    <property type="term" value="F:ATP binding"/>
    <property type="evidence" value="ECO:0007669"/>
    <property type="project" value="UniProtKB-KW"/>
</dbReference>
<dbReference type="GO" id="GO:0033862">
    <property type="term" value="F:UMP kinase activity"/>
    <property type="evidence" value="ECO:0007669"/>
    <property type="project" value="UniProtKB-EC"/>
</dbReference>
<dbReference type="GO" id="GO:0044210">
    <property type="term" value="P:'de novo' CTP biosynthetic process"/>
    <property type="evidence" value="ECO:0007669"/>
    <property type="project" value="UniProtKB-UniRule"/>
</dbReference>
<dbReference type="GO" id="GO:0006225">
    <property type="term" value="P:UDP biosynthetic process"/>
    <property type="evidence" value="ECO:0007669"/>
    <property type="project" value="TreeGrafter"/>
</dbReference>
<dbReference type="CDD" id="cd04254">
    <property type="entry name" value="AAK_UMPK-PyrH-Ec"/>
    <property type="match status" value="1"/>
</dbReference>
<dbReference type="FunFam" id="3.40.1160.10:FF:000001">
    <property type="entry name" value="Uridylate kinase"/>
    <property type="match status" value="1"/>
</dbReference>
<dbReference type="Gene3D" id="3.40.1160.10">
    <property type="entry name" value="Acetylglutamate kinase-like"/>
    <property type="match status" value="1"/>
</dbReference>
<dbReference type="HAMAP" id="MF_01220_B">
    <property type="entry name" value="PyrH_B"/>
    <property type="match status" value="1"/>
</dbReference>
<dbReference type="InterPro" id="IPR036393">
    <property type="entry name" value="AceGlu_kinase-like_sf"/>
</dbReference>
<dbReference type="InterPro" id="IPR001048">
    <property type="entry name" value="Asp/Glu/Uridylate_kinase"/>
</dbReference>
<dbReference type="InterPro" id="IPR011817">
    <property type="entry name" value="Uridylate_kinase"/>
</dbReference>
<dbReference type="InterPro" id="IPR015963">
    <property type="entry name" value="Uridylate_kinase_bac"/>
</dbReference>
<dbReference type="NCBIfam" id="TIGR02075">
    <property type="entry name" value="pyrH_bact"/>
    <property type="match status" value="1"/>
</dbReference>
<dbReference type="PANTHER" id="PTHR42833">
    <property type="entry name" value="URIDYLATE KINASE"/>
    <property type="match status" value="1"/>
</dbReference>
<dbReference type="PANTHER" id="PTHR42833:SF4">
    <property type="entry name" value="URIDYLATE KINASE PUMPKIN, CHLOROPLASTIC"/>
    <property type="match status" value="1"/>
</dbReference>
<dbReference type="Pfam" id="PF00696">
    <property type="entry name" value="AA_kinase"/>
    <property type="match status" value="1"/>
</dbReference>
<dbReference type="PIRSF" id="PIRSF005650">
    <property type="entry name" value="Uridylate_kin"/>
    <property type="match status" value="1"/>
</dbReference>
<dbReference type="SUPFAM" id="SSF53633">
    <property type="entry name" value="Carbamate kinase-like"/>
    <property type="match status" value="1"/>
</dbReference>
<reference key="1">
    <citation type="journal article" date="2003" name="Proc. Natl. Acad. Sci. U.S.A.">
        <title>Complete genome sequence of Lactobacillus plantarum WCFS1.</title>
        <authorList>
            <person name="Kleerebezem M."/>
            <person name="Boekhorst J."/>
            <person name="van Kranenburg R."/>
            <person name="Molenaar D."/>
            <person name="Kuipers O.P."/>
            <person name="Leer R."/>
            <person name="Tarchini R."/>
            <person name="Peters S.A."/>
            <person name="Sandbrink H.M."/>
            <person name="Fiers M.W.E.J."/>
            <person name="Stiekema W."/>
            <person name="Klein Lankhorst R.M."/>
            <person name="Bron P.A."/>
            <person name="Hoffer S.M."/>
            <person name="Nierop Groot M.N."/>
            <person name="Kerkhoven R."/>
            <person name="De Vries M."/>
            <person name="Ursing B."/>
            <person name="De Vos W.M."/>
            <person name="Siezen R.J."/>
        </authorList>
    </citation>
    <scope>NUCLEOTIDE SEQUENCE [LARGE SCALE GENOMIC DNA]</scope>
    <source>
        <strain>ATCC BAA-793 / NCIMB 8826 / WCFS1</strain>
    </source>
</reference>
<reference key="2">
    <citation type="journal article" date="2012" name="J. Bacteriol.">
        <title>Complete resequencing and reannotation of the Lactobacillus plantarum WCFS1 genome.</title>
        <authorList>
            <person name="Siezen R.J."/>
            <person name="Francke C."/>
            <person name="Renckens B."/>
            <person name="Boekhorst J."/>
            <person name="Wels M."/>
            <person name="Kleerebezem M."/>
            <person name="van Hijum S.A."/>
        </authorList>
    </citation>
    <scope>NUCLEOTIDE SEQUENCE [LARGE SCALE GENOMIC DNA]</scope>
    <scope>GENOME REANNOTATION</scope>
    <source>
        <strain>ATCC BAA-793 / NCIMB 8826 / WCFS1</strain>
    </source>
</reference>
<accession>Q88VJ6</accession>
<accession>F9UQ08</accession>
<comment type="function">
    <text evidence="1">Catalyzes the reversible phosphorylation of UMP to UDP.</text>
</comment>
<comment type="catalytic activity">
    <reaction evidence="1">
        <text>UMP + ATP = UDP + ADP</text>
        <dbReference type="Rhea" id="RHEA:24400"/>
        <dbReference type="ChEBI" id="CHEBI:30616"/>
        <dbReference type="ChEBI" id="CHEBI:57865"/>
        <dbReference type="ChEBI" id="CHEBI:58223"/>
        <dbReference type="ChEBI" id="CHEBI:456216"/>
        <dbReference type="EC" id="2.7.4.22"/>
    </reaction>
</comment>
<comment type="activity regulation">
    <text evidence="1">Allosterically activated by GTP. Inhibited by UTP.</text>
</comment>
<comment type="pathway">
    <text evidence="1">Pyrimidine metabolism; CTP biosynthesis via de novo pathway; UDP from UMP (UMPK route): step 1/1.</text>
</comment>
<comment type="subunit">
    <text evidence="1">Homohexamer.</text>
</comment>
<comment type="subcellular location">
    <subcellularLocation>
        <location evidence="1">Cytoplasm</location>
    </subcellularLocation>
</comment>
<comment type="similarity">
    <text evidence="1">Belongs to the UMP kinase family.</text>
</comment>
<organism>
    <name type="scientific">Lactiplantibacillus plantarum (strain ATCC BAA-793 / NCIMB 8826 / WCFS1)</name>
    <name type="common">Lactobacillus plantarum</name>
    <dbReference type="NCBI Taxonomy" id="220668"/>
    <lineage>
        <taxon>Bacteria</taxon>
        <taxon>Bacillati</taxon>
        <taxon>Bacillota</taxon>
        <taxon>Bacilli</taxon>
        <taxon>Lactobacillales</taxon>
        <taxon>Lactobacillaceae</taxon>
        <taxon>Lactiplantibacillus</taxon>
    </lineage>
</organism>
<evidence type="ECO:0000255" key="1">
    <source>
        <dbReference type="HAMAP-Rule" id="MF_01220"/>
    </source>
</evidence>
<gene>
    <name evidence="1" type="primary">pyrH</name>
    <name type="ordered locus">lp_2053</name>
</gene>
<feature type="chain" id="PRO_0000143851" description="Uridylate kinase">
    <location>
        <begin position="1"/>
        <end position="240"/>
    </location>
</feature>
<feature type="region of interest" description="Involved in allosteric activation by GTP" evidence="1">
    <location>
        <begin position="20"/>
        <end position="25"/>
    </location>
</feature>
<feature type="binding site" evidence="1">
    <location>
        <begin position="12"/>
        <end position="15"/>
    </location>
    <ligand>
        <name>ATP</name>
        <dbReference type="ChEBI" id="CHEBI:30616"/>
    </ligand>
</feature>
<feature type="binding site" evidence="1">
    <location>
        <position position="54"/>
    </location>
    <ligand>
        <name>UMP</name>
        <dbReference type="ChEBI" id="CHEBI:57865"/>
    </ligand>
</feature>
<feature type="binding site" evidence="1">
    <location>
        <position position="55"/>
    </location>
    <ligand>
        <name>ATP</name>
        <dbReference type="ChEBI" id="CHEBI:30616"/>
    </ligand>
</feature>
<feature type="binding site" evidence="1">
    <location>
        <position position="59"/>
    </location>
    <ligand>
        <name>ATP</name>
        <dbReference type="ChEBI" id="CHEBI:30616"/>
    </ligand>
</feature>
<feature type="binding site" evidence="1">
    <location>
        <position position="74"/>
    </location>
    <ligand>
        <name>UMP</name>
        <dbReference type="ChEBI" id="CHEBI:57865"/>
    </ligand>
</feature>
<feature type="binding site" evidence="1">
    <location>
        <begin position="135"/>
        <end position="142"/>
    </location>
    <ligand>
        <name>UMP</name>
        <dbReference type="ChEBI" id="CHEBI:57865"/>
    </ligand>
</feature>
<feature type="binding site" evidence="1">
    <location>
        <position position="163"/>
    </location>
    <ligand>
        <name>ATP</name>
        <dbReference type="ChEBI" id="CHEBI:30616"/>
    </ligand>
</feature>
<feature type="binding site" evidence="1">
    <location>
        <position position="169"/>
    </location>
    <ligand>
        <name>ATP</name>
        <dbReference type="ChEBI" id="CHEBI:30616"/>
    </ligand>
</feature>
<feature type="binding site" evidence="1">
    <location>
        <position position="172"/>
    </location>
    <ligand>
        <name>ATP</name>
        <dbReference type="ChEBI" id="CHEBI:30616"/>
    </ligand>
</feature>
<name>PYRH_LACPL</name>
<sequence>MSEVKYKRVILKLSGEALAGEKGFGINPPVIKTVAEELKDVYDMGVQIAIVVGGGNMWRGEAGAQMGMERAQADYIGMLATIMNALALQDNLESIGVPTRVQTSIEMRQIAEPYIRRKAMRHLEKRRIVIFAGGTGSPYFSTDTTAALRAAEINADAILMAKNGVDGVYSADPNKDASAVKFDTLTHLDIINKGLQVMDTTASSLSMDNDIPVVVFNLNEPGNIRKVVAGEHIGTTVRGK</sequence>
<keyword id="KW-0021">Allosteric enzyme</keyword>
<keyword id="KW-0067">ATP-binding</keyword>
<keyword id="KW-0963">Cytoplasm</keyword>
<keyword id="KW-0418">Kinase</keyword>
<keyword id="KW-0547">Nucleotide-binding</keyword>
<keyword id="KW-0665">Pyrimidine biosynthesis</keyword>
<keyword id="KW-1185">Reference proteome</keyword>
<keyword id="KW-0808">Transferase</keyword>
<proteinExistence type="inferred from homology"/>